<reference key="1">
    <citation type="journal article" date="1994" name="J. Bacteriol.">
        <title>Cloning and sequencing of a 2,5-dichloro-2,5-cyclohexadiene-1,4-diol dehydrogenase gene involved in the degradation of gamma-hexachlorocyclohexane in Pseudomonas paucimobilis.</title>
        <authorList>
            <person name="Nagata Y."/>
            <person name="Ohtomo R."/>
            <person name="Miyauchi K."/>
            <person name="Fukuda M."/>
            <person name="Yano K."/>
            <person name="Takagi M."/>
        </authorList>
    </citation>
    <scope>NUCLEOTIDE SEQUENCE [GENOMIC DNA]</scope>
    <scope>FUNCTION</scope>
    <scope>CATALYTIC ACTIVITY</scope>
    <scope>PATHWAY</scope>
    <scope>DISRUPTION PHENOTYPE</scope>
    <scope>INDUCTION</scope>
    <source>
        <strain>DSM 16413 / CCM 7287 / MTCC 6362 / UT26 / NBRC 101211 / UT26S</strain>
    </source>
</reference>
<reference key="2">
    <citation type="journal article" date="2010" name="J. Bacteriol.">
        <title>Complete genome sequence of the representative gamma-hexachlorocyclohexane-degrading bacterium Sphingobium japonicum UT26.</title>
        <authorList>
            <person name="Nagata Y."/>
            <person name="Ohtsubo Y."/>
            <person name="Endo R."/>
            <person name="Ichikawa N."/>
            <person name="Ankai A."/>
            <person name="Oguchi A."/>
            <person name="Fukui S."/>
            <person name="Fujita N."/>
            <person name="Tsuda M."/>
        </authorList>
    </citation>
    <scope>NUCLEOTIDE SEQUENCE [LARGE SCALE GENOMIC DNA]</scope>
    <source>
        <strain>DSM 16413 / CCM 7287 / MTCC 6362 / UT26 / NBRC 101211 / UT26S</strain>
    </source>
</reference>
<dbReference type="EC" id="1.1.1.-" evidence="3"/>
<dbReference type="EMBL" id="D14595">
    <property type="protein sequence ID" value="BAA03444.1"/>
    <property type="molecule type" value="Genomic_DNA"/>
</dbReference>
<dbReference type="EMBL" id="AP010803">
    <property type="protein sequence ID" value="BAI95393.1"/>
    <property type="molecule type" value="Genomic_DNA"/>
</dbReference>
<dbReference type="RefSeq" id="WP_013039118.1">
    <property type="nucleotide sequence ID" value="NC_014006.1"/>
</dbReference>
<dbReference type="SMR" id="D4YYG1"/>
<dbReference type="STRING" id="452662.SJA_C1-05590"/>
<dbReference type="GeneID" id="29272240"/>
<dbReference type="KEGG" id="sjp:SJA_C1-05590"/>
<dbReference type="eggNOG" id="COG1028">
    <property type="taxonomic scope" value="Bacteria"/>
</dbReference>
<dbReference type="HOGENOM" id="CLU_010194_1_0_5"/>
<dbReference type="UniPathway" id="UPA00689"/>
<dbReference type="Proteomes" id="UP000007753">
    <property type="component" value="Chromosome 1"/>
</dbReference>
<dbReference type="GO" id="GO:0018502">
    <property type="term" value="F:2,5-dichloro-2,5-cyclohexadiene-1,4-diol dehydrogenase activity"/>
    <property type="evidence" value="ECO:0007669"/>
    <property type="project" value="RHEA"/>
</dbReference>
<dbReference type="GO" id="GO:0009636">
    <property type="term" value="P:response to toxic substance"/>
    <property type="evidence" value="ECO:0007669"/>
    <property type="project" value="UniProtKB-KW"/>
</dbReference>
<dbReference type="CDD" id="cd05233">
    <property type="entry name" value="SDR_c"/>
    <property type="match status" value="1"/>
</dbReference>
<dbReference type="FunFam" id="3.40.50.720:FF:000084">
    <property type="entry name" value="Short-chain dehydrogenase reductase"/>
    <property type="match status" value="1"/>
</dbReference>
<dbReference type="Gene3D" id="3.40.50.720">
    <property type="entry name" value="NAD(P)-binding Rossmann-like Domain"/>
    <property type="match status" value="1"/>
</dbReference>
<dbReference type="InterPro" id="IPR036291">
    <property type="entry name" value="NAD(P)-bd_dom_sf"/>
</dbReference>
<dbReference type="InterPro" id="IPR020904">
    <property type="entry name" value="Sc_DH/Rdtase_CS"/>
</dbReference>
<dbReference type="InterPro" id="IPR002347">
    <property type="entry name" value="SDR_fam"/>
</dbReference>
<dbReference type="NCBIfam" id="NF005559">
    <property type="entry name" value="PRK07231.1"/>
    <property type="match status" value="1"/>
</dbReference>
<dbReference type="PANTHER" id="PTHR24321">
    <property type="entry name" value="DEHYDROGENASES, SHORT CHAIN"/>
    <property type="match status" value="1"/>
</dbReference>
<dbReference type="PANTHER" id="PTHR24321:SF8">
    <property type="entry name" value="ESTRADIOL 17-BETA-DEHYDROGENASE 8-RELATED"/>
    <property type="match status" value="1"/>
</dbReference>
<dbReference type="Pfam" id="PF13561">
    <property type="entry name" value="adh_short_C2"/>
    <property type="match status" value="1"/>
</dbReference>
<dbReference type="PRINTS" id="PR00081">
    <property type="entry name" value="GDHRDH"/>
</dbReference>
<dbReference type="PRINTS" id="PR00080">
    <property type="entry name" value="SDRFAMILY"/>
</dbReference>
<dbReference type="SUPFAM" id="SSF51735">
    <property type="entry name" value="NAD(P)-binding Rossmann-fold domains"/>
    <property type="match status" value="1"/>
</dbReference>
<dbReference type="PROSITE" id="PS00061">
    <property type="entry name" value="ADH_SHORT"/>
    <property type="match status" value="1"/>
</dbReference>
<protein>
    <recommendedName>
        <fullName evidence="4">2,5-dichloro-2,5-cyclohexadiene-1,4-diol dehydrogenase</fullName>
        <shortName evidence="4">2,5-DDOL dehydrogenase</shortName>
        <ecNumber evidence="3">1.1.1.-</ecNumber>
    </recommendedName>
</protein>
<sequence length="250" mass="25572">MSDLSGKTIIVTGGGSGIGRATVELLVASGANVAVADINDEAGEAVVAASGGKAAYFRCDIAQEEDVKALVAQTLAAFGGLDGAFNNAAIPQAGLPLAEVSLERFRQSMDINVTGTFLCMKYQILAMIERGTKGSIVNTASAAGVVGVPMHGEYVGAKHAVVGLTRVAAADYGKHGIRVNALVPGAVRTPMLQRAMDNDAGLEPYLNSIHPIGRFSEPHEQAQAAVWLLSDAASFVTGSCLAADGGFTAI</sequence>
<accession>D4YYG1</accession>
<accession>P50197</accession>
<keyword id="KW-0216">Detoxification</keyword>
<keyword id="KW-0520">NAD</keyword>
<keyword id="KW-0560">Oxidoreductase</keyword>
<keyword id="KW-1185">Reference proteome</keyword>
<feature type="chain" id="PRO_0000054719" description="2,5-dichloro-2,5-cyclohexadiene-1,4-diol dehydrogenase">
    <location>
        <begin position="1"/>
        <end position="250"/>
    </location>
</feature>
<feature type="active site" description="Proton acceptor" evidence="2">
    <location>
        <position position="154"/>
    </location>
</feature>
<feature type="binding site" evidence="1">
    <location>
        <begin position="9"/>
        <end position="34"/>
    </location>
    <ligand>
        <name>NAD(+)</name>
        <dbReference type="ChEBI" id="CHEBI:57540"/>
    </ligand>
</feature>
<feature type="binding site" evidence="1">
    <location>
        <position position="141"/>
    </location>
    <ligand>
        <name>substrate</name>
    </ligand>
</feature>
<feature type="sequence conflict" description="In Ref. 1; BAA03444." evidence="5" ref="1">
    <original>A</original>
    <variation>P</variation>
    <location>
        <position position="34"/>
    </location>
</feature>
<feature type="sequence conflict" description="In Ref. 1; BAA03444." evidence="5" ref="1">
    <original>A</original>
    <variation>T</variation>
    <location>
        <position position="49"/>
    </location>
</feature>
<feature type="sequence conflict" description="In Ref. 1; BAA03444." evidence="5" ref="1">
    <original>A</original>
    <variation>S</variation>
    <location>
        <position position="84"/>
    </location>
</feature>
<evidence type="ECO:0000250" key="1"/>
<evidence type="ECO:0000255" key="2">
    <source>
        <dbReference type="PROSITE-ProRule" id="PRU10001"/>
    </source>
</evidence>
<evidence type="ECO:0000269" key="3">
    <source>
    </source>
</evidence>
<evidence type="ECO:0000303" key="4">
    <source>
    </source>
</evidence>
<evidence type="ECO:0000305" key="5"/>
<evidence type="ECO:0000312" key="6">
    <source>
        <dbReference type="EMBL" id="BAI95393.1"/>
    </source>
</evidence>
<name>LINC_SPHIU</name>
<organism>
    <name type="scientific">Sphingobium indicum (strain DSM 16413 / CCM 7287 / MTCC 6362 / UT26 / NBRC 101211 / UT26S)</name>
    <name type="common">Sphingobium japonicum</name>
    <dbReference type="NCBI Taxonomy" id="452662"/>
    <lineage>
        <taxon>Bacteria</taxon>
        <taxon>Pseudomonadati</taxon>
        <taxon>Pseudomonadota</taxon>
        <taxon>Alphaproteobacteria</taxon>
        <taxon>Sphingomonadales</taxon>
        <taxon>Sphingomonadaceae</taxon>
        <taxon>Sphingobium</taxon>
    </lineage>
</organism>
<proteinExistence type="evidence at protein level"/>
<gene>
    <name evidence="4" type="primary">linC</name>
    <name evidence="6" type="ordered locus">SJA_C1-05590</name>
</gene>
<comment type="function">
    <text evidence="3">Catalyzes the dehydrogenation of 2,5-dichloro-2,5-cyclohexadiene-1,4-diol (2,5-DDOL) to 2,5-dichlorohydroquinone (2,5-DCHQ), a step in the degradation of gamma-hexachlorocyclohexane (gamma-HCH or lindane). Has an essential role in this assimilation pathway that allows S.japonicum UT26 to grow on gamma-HCH as the sole source of carbon and energy.</text>
</comment>
<comment type="catalytic activity">
    <reaction evidence="3">
        <text>2,5-dichlorocyclohexa-2,5-dien-1,4-diol + NAD(+) = 2,5-dichlorohydroquinone + NADH + H(+)</text>
        <dbReference type="Rhea" id="RHEA:15741"/>
        <dbReference type="ChEBI" id="CHEBI:15378"/>
        <dbReference type="ChEBI" id="CHEBI:27545"/>
        <dbReference type="ChEBI" id="CHEBI:28975"/>
        <dbReference type="ChEBI" id="CHEBI:57540"/>
        <dbReference type="ChEBI" id="CHEBI:57945"/>
    </reaction>
</comment>
<comment type="pathway">
    <text evidence="3">Xenobiotic degradation; gamma-hexachlorocyclohexane degradation.</text>
</comment>
<comment type="induction">
    <text evidence="3">Constitutively expressed.</text>
</comment>
<comment type="disruption phenotype">
    <text evidence="3">Cells lacking this gene lose the ability to grow on gamma-HCH; growth is restored when a plasmid containing the linC gene is introduced.</text>
</comment>
<comment type="similarity">
    <text evidence="5">Belongs to the short-chain dehydrogenases/reductases (SDR) family.</text>
</comment>